<organism>
    <name type="scientific">Homo sapiens</name>
    <name type="common">Human</name>
    <dbReference type="NCBI Taxonomy" id="9606"/>
    <lineage>
        <taxon>Eukaryota</taxon>
        <taxon>Metazoa</taxon>
        <taxon>Chordata</taxon>
        <taxon>Craniata</taxon>
        <taxon>Vertebrata</taxon>
        <taxon>Euteleostomi</taxon>
        <taxon>Mammalia</taxon>
        <taxon>Eutheria</taxon>
        <taxon>Euarchontoglires</taxon>
        <taxon>Primates</taxon>
        <taxon>Haplorrhini</taxon>
        <taxon>Catarrhini</taxon>
        <taxon>Hominidae</taxon>
        <taxon>Homo</taxon>
    </lineage>
</organism>
<evidence type="ECO:0000250" key="1"/>
<evidence type="ECO:0000255" key="2">
    <source>
        <dbReference type="PROSITE-ProRule" id="PRU00080"/>
    </source>
</evidence>
<evidence type="ECO:0000305" key="3"/>
<sequence length="374" mass="40516">MAEPGEGLPEEVLALIFRHLSLRDRAAAARVCRAWAAAATCSAVWHDTKISCECELEGMLPPYLSACLDHIHNLRLEFEPSRKPSRRAAIELLMVLAGRAPGLRGLRLECRGEKPLFDAGRDVLEAVHAVCGAASQLRHLDLRRLSFTLDDALVLQAARSCPELHSLFLDNSTLVGSVGPGSVLELLEACPRLRALGLHLASLSHAILEALAAPDRAPFALLALRCACPEDARASPLPNEAWVALRRRHPGLAVELELEPALPAESVTRVLQPAVPVAALRLNLSGDTVGPVRFAAHHYAATLCALEVRAAASAELNAALEELAARCAALREVHCFCVVSHSVLDAFRAHCPRLRTYTLKLTREPHPWRPTLVA</sequence>
<reference key="1">
    <citation type="journal article" date="2004" name="Nat. Genet.">
        <title>Complete sequencing and characterization of 21,243 full-length human cDNAs.</title>
        <authorList>
            <person name="Ota T."/>
            <person name="Suzuki Y."/>
            <person name="Nishikawa T."/>
            <person name="Otsuki T."/>
            <person name="Sugiyama T."/>
            <person name="Irie R."/>
            <person name="Wakamatsu A."/>
            <person name="Hayashi K."/>
            <person name="Sato H."/>
            <person name="Nagai K."/>
            <person name="Kimura K."/>
            <person name="Makita H."/>
            <person name="Sekine M."/>
            <person name="Obayashi M."/>
            <person name="Nishi T."/>
            <person name="Shibahara T."/>
            <person name="Tanaka T."/>
            <person name="Ishii S."/>
            <person name="Yamamoto J."/>
            <person name="Saito K."/>
            <person name="Kawai Y."/>
            <person name="Isono Y."/>
            <person name="Nakamura Y."/>
            <person name="Nagahari K."/>
            <person name="Murakami K."/>
            <person name="Yasuda T."/>
            <person name="Iwayanagi T."/>
            <person name="Wagatsuma M."/>
            <person name="Shiratori A."/>
            <person name="Sudo H."/>
            <person name="Hosoiri T."/>
            <person name="Kaku Y."/>
            <person name="Kodaira H."/>
            <person name="Kondo H."/>
            <person name="Sugawara M."/>
            <person name="Takahashi M."/>
            <person name="Kanda K."/>
            <person name="Yokoi T."/>
            <person name="Furuya T."/>
            <person name="Kikkawa E."/>
            <person name="Omura Y."/>
            <person name="Abe K."/>
            <person name="Kamihara K."/>
            <person name="Katsuta N."/>
            <person name="Sato K."/>
            <person name="Tanikawa M."/>
            <person name="Yamazaki M."/>
            <person name="Ninomiya K."/>
            <person name="Ishibashi T."/>
            <person name="Yamashita H."/>
            <person name="Murakawa K."/>
            <person name="Fujimori K."/>
            <person name="Tanai H."/>
            <person name="Kimata M."/>
            <person name="Watanabe M."/>
            <person name="Hiraoka S."/>
            <person name="Chiba Y."/>
            <person name="Ishida S."/>
            <person name="Ono Y."/>
            <person name="Takiguchi S."/>
            <person name="Watanabe S."/>
            <person name="Yosida M."/>
            <person name="Hotuta T."/>
            <person name="Kusano J."/>
            <person name="Kanehori K."/>
            <person name="Takahashi-Fujii A."/>
            <person name="Hara H."/>
            <person name="Tanase T.-O."/>
            <person name="Nomura Y."/>
            <person name="Togiya S."/>
            <person name="Komai F."/>
            <person name="Hara R."/>
            <person name="Takeuchi K."/>
            <person name="Arita M."/>
            <person name="Imose N."/>
            <person name="Musashino K."/>
            <person name="Yuuki H."/>
            <person name="Oshima A."/>
            <person name="Sasaki N."/>
            <person name="Aotsuka S."/>
            <person name="Yoshikawa Y."/>
            <person name="Matsunawa H."/>
            <person name="Ichihara T."/>
            <person name="Shiohata N."/>
            <person name="Sano S."/>
            <person name="Moriya S."/>
            <person name="Momiyama H."/>
            <person name="Satoh N."/>
            <person name="Takami S."/>
            <person name="Terashima Y."/>
            <person name="Suzuki O."/>
            <person name="Nakagawa S."/>
            <person name="Senoh A."/>
            <person name="Mizoguchi H."/>
            <person name="Goto Y."/>
            <person name="Shimizu F."/>
            <person name="Wakebe H."/>
            <person name="Hishigaki H."/>
            <person name="Watanabe T."/>
            <person name="Sugiyama A."/>
            <person name="Takemoto M."/>
            <person name="Kawakami B."/>
            <person name="Yamazaki M."/>
            <person name="Watanabe K."/>
            <person name="Kumagai A."/>
            <person name="Itakura S."/>
            <person name="Fukuzumi Y."/>
            <person name="Fujimori Y."/>
            <person name="Komiyama M."/>
            <person name="Tashiro H."/>
            <person name="Tanigami A."/>
            <person name="Fujiwara T."/>
            <person name="Ono T."/>
            <person name="Yamada K."/>
            <person name="Fujii Y."/>
            <person name="Ozaki K."/>
            <person name="Hirao M."/>
            <person name="Ohmori Y."/>
            <person name="Kawabata A."/>
            <person name="Hikiji T."/>
            <person name="Kobatake N."/>
            <person name="Inagaki H."/>
            <person name="Ikema Y."/>
            <person name="Okamoto S."/>
            <person name="Okitani R."/>
            <person name="Kawakami T."/>
            <person name="Noguchi S."/>
            <person name="Itoh T."/>
            <person name="Shigeta K."/>
            <person name="Senba T."/>
            <person name="Matsumura K."/>
            <person name="Nakajima Y."/>
            <person name="Mizuno T."/>
            <person name="Morinaga M."/>
            <person name="Sasaki M."/>
            <person name="Togashi T."/>
            <person name="Oyama M."/>
            <person name="Hata H."/>
            <person name="Watanabe M."/>
            <person name="Komatsu T."/>
            <person name="Mizushima-Sugano J."/>
            <person name="Satoh T."/>
            <person name="Shirai Y."/>
            <person name="Takahashi Y."/>
            <person name="Nakagawa K."/>
            <person name="Okumura K."/>
            <person name="Nagase T."/>
            <person name="Nomura N."/>
            <person name="Kikuchi H."/>
            <person name="Masuho Y."/>
            <person name="Yamashita R."/>
            <person name="Nakai K."/>
            <person name="Yada T."/>
            <person name="Nakamura Y."/>
            <person name="Ohara O."/>
            <person name="Isogai T."/>
            <person name="Sugano S."/>
        </authorList>
    </citation>
    <scope>NUCLEOTIDE SEQUENCE [LARGE SCALE MRNA]</scope>
    <source>
        <tissue>Placenta</tissue>
    </source>
</reference>
<reference key="2">
    <citation type="journal article" date="2004" name="Genome Res.">
        <title>The status, quality, and expansion of the NIH full-length cDNA project: the Mammalian Gene Collection (MGC).</title>
        <authorList>
            <consortium name="The MGC Project Team"/>
        </authorList>
    </citation>
    <scope>NUCLEOTIDE SEQUENCE [LARGE SCALE MRNA]</scope>
    <source>
        <tissue>Lung</tissue>
    </source>
</reference>
<accession>Q96CD0</accession>
<accession>Q9NUM0</accession>
<name>FBXL8_HUMAN</name>
<proteinExistence type="evidence at protein level"/>
<feature type="chain" id="PRO_0000119850" description="F-box/LRR-repeat protein 8">
    <location>
        <begin position="1"/>
        <end position="374"/>
    </location>
</feature>
<feature type="domain" description="F-box" evidence="2">
    <location>
        <begin position="2"/>
        <end position="48"/>
    </location>
</feature>
<feature type="sequence conflict" description="In Ref. 1; BAA92103." evidence="3" ref="1">
    <original>S</original>
    <variation>N</variation>
    <location>
        <position position="135"/>
    </location>
</feature>
<dbReference type="EMBL" id="AK002140">
    <property type="protein sequence ID" value="BAA92103.1"/>
    <property type="molecule type" value="mRNA"/>
</dbReference>
<dbReference type="EMBL" id="BC014414">
    <property type="protein sequence ID" value="AAH14414.1"/>
    <property type="molecule type" value="mRNA"/>
</dbReference>
<dbReference type="CCDS" id="CCDS10831.1"/>
<dbReference type="RefSeq" id="NP_060848.2">
    <property type="nucleotide sequence ID" value="NM_018378.2"/>
</dbReference>
<dbReference type="SMR" id="Q96CD0"/>
<dbReference type="BioGRID" id="120617">
    <property type="interactions" value="12"/>
</dbReference>
<dbReference type="ComplexPortal" id="CPX-2438">
    <property type="entry name" value="SCF E3 ubiquitin ligase complex, FBXL8 variant"/>
</dbReference>
<dbReference type="FunCoup" id="Q96CD0">
    <property type="interactions" value="129"/>
</dbReference>
<dbReference type="IntAct" id="Q96CD0">
    <property type="interactions" value="8"/>
</dbReference>
<dbReference type="STRING" id="9606.ENSP00000258200"/>
<dbReference type="BioMuta" id="FBXL8"/>
<dbReference type="DMDM" id="38257737"/>
<dbReference type="jPOST" id="Q96CD0"/>
<dbReference type="MassIVE" id="Q96CD0"/>
<dbReference type="PaxDb" id="9606-ENSP00000258200"/>
<dbReference type="PeptideAtlas" id="Q96CD0"/>
<dbReference type="ProteomicsDB" id="76179"/>
<dbReference type="Pumba" id="Q96CD0"/>
<dbReference type="Antibodypedia" id="29422">
    <property type="antibodies" value="149 antibodies from 20 providers"/>
</dbReference>
<dbReference type="DNASU" id="55336"/>
<dbReference type="Ensembl" id="ENST00000258200.8">
    <property type="protein sequence ID" value="ENSP00000258200.3"/>
    <property type="gene ID" value="ENSG00000135722.9"/>
</dbReference>
<dbReference type="Ensembl" id="ENST00000519917.5">
    <property type="protein sequence ID" value="ENSP00000430490.1"/>
    <property type="gene ID" value="ENSG00000135722.9"/>
</dbReference>
<dbReference type="GeneID" id="55336"/>
<dbReference type="KEGG" id="hsa:55336"/>
<dbReference type="MANE-Select" id="ENST00000258200.8">
    <property type="protein sequence ID" value="ENSP00000258200.3"/>
    <property type="RefSeq nucleotide sequence ID" value="NM_018378.3"/>
    <property type="RefSeq protein sequence ID" value="NP_060848.2"/>
</dbReference>
<dbReference type="UCSC" id="uc002erk.2">
    <property type="organism name" value="human"/>
</dbReference>
<dbReference type="AGR" id="HGNC:17875"/>
<dbReference type="CTD" id="55336"/>
<dbReference type="DisGeNET" id="55336"/>
<dbReference type="GeneCards" id="FBXL8"/>
<dbReference type="HGNC" id="HGNC:17875">
    <property type="gene designation" value="FBXL8"/>
</dbReference>
<dbReference type="HPA" id="ENSG00000135722">
    <property type="expression patterns" value="Low tissue specificity"/>
</dbReference>
<dbReference type="MIM" id="609077">
    <property type="type" value="gene"/>
</dbReference>
<dbReference type="neXtProt" id="NX_Q96CD0"/>
<dbReference type="OpenTargets" id="ENSG00000135722"/>
<dbReference type="PharmGKB" id="PA28028"/>
<dbReference type="VEuPathDB" id="HostDB:ENSG00000135722"/>
<dbReference type="eggNOG" id="ENOG502QU59">
    <property type="taxonomic scope" value="Eukaryota"/>
</dbReference>
<dbReference type="GeneTree" id="ENSGT00420000029943"/>
<dbReference type="HOGENOM" id="CLU_062031_1_0_1"/>
<dbReference type="InParanoid" id="Q96CD0"/>
<dbReference type="OMA" id="SCDCERE"/>
<dbReference type="OrthoDB" id="3219396at2759"/>
<dbReference type="PAN-GO" id="Q96CD0">
    <property type="GO annotations" value="7 GO annotations based on evolutionary models"/>
</dbReference>
<dbReference type="PhylomeDB" id="Q96CD0"/>
<dbReference type="TreeFam" id="TF321665"/>
<dbReference type="PathwayCommons" id="Q96CD0"/>
<dbReference type="Reactome" id="R-HSA-8951664">
    <property type="pathway name" value="Neddylation"/>
</dbReference>
<dbReference type="Reactome" id="R-HSA-983168">
    <property type="pathway name" value="Antigen processing: Ubiquitination &amp; Proteasome degradation"/>
</dbReference>
<dbReference type="SignaLink" id="Q96CD0"/>
<dbReference type="BioGRID-ORCS" id="55336">
    <property type="hits" value="8 hits in 1197 CRISPR screens"/>
</dbReference>
<dbReference type="GenomeRNAi" id="55336"/>
<dbReference type="Pharos" id="Q96CD0">
    <property type="development level" value="Tdark"/>
</dbReference>
<dbReference type="PRO" id="PR:Q96CD0"/>
<dbReference type="Proteomes" id="UP000005640">
    <property type="component" value="Chromosome 16"/>
</dbReference>
<dbReference type="RNAct" id="Q96CD0">
    <property type="molecule type" value="protein"/>
</dbReference>
<dbReference type="Bgee" id="ENSG00000135722">
    <property type="expression patterns" value="Expressed in body of pancreas and 96 other cell types or tissues"/>
</dbReference>
<dbReference type="ExpressionAtlas" id="Q96CD0">
    <property type="expression patterns" value="baseline and differential"/>
</dbReference>
<dbReference type="GO" id="GO:0005829">
    <property type="term" value="C:cytosol"/>
    <property type="evidence" value="ECO:0000304"/>
    <property type="project" value="Reactome"/>
</dbReference>
<dbReference type="FunFam" id="1.20.1280.50:FF:000005">
    <property type="entry name" value="F-box/LRR-repeat protein 3 isoform X1"/>
    <property type="match status" value="1"/>
</dbReference>
<dbReference type="FunFam" id="3.80.10.10:FF:000260">
    <property type="entry name" value="F-box/LRR-repeat protein 8"/>
    <property type="match status" value="1"/>
</dbReference>
<dbReference type="Gene3D" id="1.20.1280.50">
    <property type="match status" value="1"/>
</dbReference>
<dbReference type="Gene3D" id="3.80.10.10">
    <property type="entry name" value="Ribonuclease Inhibitor"/>
    <property type="match status" value="1"/>
</dbReference>
<dbReference type="InterPro" id="IPR036047">
    <property type="entry name" value="F-box-like_dom_sf"/>
</dbReference>
<dbReference type="InterPro" id="IPR001810">
    <property type="entry name" value="F-box_dom"/>
</dbReference>
<dbReference type="InterPro" id="IPR032675">
    <property type="entry name" value="LRR_dom_sf"/>
</dbReference>
<dbReference type="PANTHER" id="PTHR20872">
    <property type="match status" value="1"/>
</dbReference>
<dbReference type="PANTHER" id="PTHR20872:SF1">
    <property type="entry name" value="F-BOX DOMAIN-CONTAINING PROTEIN"/>
    <property type="match status" value="1"/>
</dbReference>
<dbReference type="Pfam" id="PF12937">
    <property type="entry name" value="F-box-like"/>
    <property type="match status" value="1"/>
</dbReference>
<dbReference type="SMART" id="SM00256">
    <property type="entry name" value="FBOX"/>
    <property type="match status" value="1"/>
</dbReference>
<dbReference type="SUPFAM" id="SSF81383">
    <property type="entry name" value="F-box domain"/>
    <property type="match status" value="1"/>
</dbReference>
<dbReference type="SUPFAM" id="SSF52047">
    <property type="entry name" value="RNI-like"/>
    <property type="match status" value="1"/>
</dbReference>
<dbReference type="PROSITE" id="PS50181">
    <property type="entry name" value="FBOX"/>
    <property type="match status" value="1"/>
</dbReference>
<protein>
    <recommendedName>
        <fullName>F-box/LRR-repeat protein 8</fullName>
    </recommendedName>
    <alternativeName>
        <fullName>F-box and leucine-rich repeat protein 8</fullName>
    </alternativeName>
    <alternativeName>
        <fullName>F-box protein FBL8</fullName>
    </alternativeName>
</protein>
<gene>
    <name type="primary">FBXL8</name>
    <name type="synonym">FBL8</name>
</gene>
<comment type="function">
    <text evidence="1">Substrate-recognition component of the SCF (SKP1-CUL1-F-box protein)-type E3 ubiquitin ligase complex.</text>
</comment>
<comment type="subunit">
    <text evidence="1">Directly interacts with SKP1 and CUL1.</text>
</comment>
<comment type="interaction">
    <interactant intactId="EBI-2321097">
        <id>Q96CD0</id>
    </interactant>
    <interactant intactId="EBI-3905054">
        <id>P13196</id>
        <label>ALAS1</label>
    </interactant>
    <organismsDiffer>false</organismsDiffer>
    <experiments>3</experiments>
</comment>
<comment type="interaction">
    <interactant intactId="EBI-2321097">
        <id>Q96CD0</id>
    </interactant>
    <interactant intactId="EBI-79165">
        <id>Q9NRD5</id>
        <label>PICK1</label>
    </interactant>
    <organismsDiffer>false</organismsDiffer>
    <experiments>3</experiments>
</comment>
<comment type="interaction">
    <interactant intactId="EBI-2321097">
        <id>Q96CD0</id>
    </interactant>
    <interactant intactId="EBI-307486">
        <id>P63208</id>
        <label>SKP1</label>
    </interactant>
    <organismsDiffer>false</organismsDiffer>
    <experiments>17</experiments>
</comment>
<comment type="caution">
    <text evidence="3">While the gene symbol and protein names are indicative of the presence of LRR repeats, such repeats are not present in this protein.</text>
</comment>
<keyword id="KW-1267">Proteomics identification</keyword>
<keyword id="KW-1185">Reference proteome</keyword>
<keyword id="KW-0833">Ubl conjugation pathway</keyword>